<keyword id="KW-0067">ATP-binding</keyword>
<keyword id="KW-0436">Ligase</keyword>
<keyword id="KW-0479">Metal-binding</keyword>
<keyword id="KW-0547">Nucleotide-binding</keyword>
<keyword id="KW-0671">Queuosine biosynthesis</keyword>
<keyword id="KW-0862">Zinc</keyword>
<evidence type="ECO:0000255" key="1">
    <source>
        <dbReference type="HAMAP-Rule" id="MF_01633"/>
    </source>
</evidence>
<reference key="1">
    <citation type="submission" date="2005-07" db="EMBL/GenBank/DDBJ databases">
        <title>Complete sequence of Synechococcus sp. CC9605.</title>
        <authorList>
            <consortium name="US DOE Joint Genome Institute"/>
            <person name="Copeland A."/>
            <person name="Lucas S."/>
            <person name="Lapidus A."/>
            <person name="Barry K."/>
            <person name="Detter J.C."/>
            <person name="Glavina T."/>
            <person name="Hammon N."/>
            <person name="Israni S."/>
            <person name="Pitluck S."/>
            <person name="Schmutz J."/>
            <person name="Martinez M."/>
            <person name="Larimer F."/>
            <person name="Land M."/>
            <person name="Kyrpides N."/>
            <person name="Ivanova N."/>
            <person name="Richardson P."/>
        </authorList>
    </citation>
    <scope>NUCLEOTIDE SEQUENCE [LARGE SCALE GENOMIC DNA]</scope>
    <source>
        <strain>CC9605</strain>
    </source>
</reference>
<name>QUEC_SYNSC</name>
<sequence>MSQRTAIALLSGGLDSATAAALALEQGDRVIGLSFDYGQRHLRELDAAAAVAQQLGLAEHHCISVNLASWGGSALTDASISIPTDGVEEGRIPPTYVPGRNTVFISVGLSLAEARGAERLVLGVNAVDYSGYPDCRPDYLNAFQTLADLASKAGREGHGAQLWAPLVQWSKVRIVEEALRLGVPIETTWSCYSGGTHPCGVCDSCRIRDAALREAGRPDLCSSTAA</sequence>
<accession>Q3AGF3</accession>
<feature type="chain" id="PRO_0000246946" description="7-cyano-7-deazaguanine synthase">
    <location>
        <begin position="1"/>
        <end position="226"/>
    </location>
</feature>
<feature type="binding site" evidence="1">
    <location>
        <begin position="10"/>
        <end position="20"/>
    </location>
    <ligand>
        <name>ATP</name>
        <dbReference type="ChEBI" id="CHEBI:30616"/>
    </ligand>
</feature>
<feature type="binding site" evidence="1">
    <location>
        <position position="191"/>
    </location>
    <ligand>
        <name>Zn(2+)</name>
        <dbReference type="ChEBI" id="CHEBI:29105"/>
    </ligand>
</feature>
<feature type="binding site" evidence="1">
    <location>
        <position position="199"/>
    </location>
    <ligand>
        <name>Zn(2+)</name>
        <dbReference type="ChEBI" id="CHEBI:29105"/>
    </ligand>
</feature>
<feature type="binding site" evidence="1">
    <location>
        <position position="202"/>
    </location>
    <ligand>
        <name>Zn(2+)</name>
        <dbReference type="ChEBI" id="CHEBI:29105"/>
    </ligand>
</feature>
<feature type="binding site" evidence="1">
    <location>
        <position position="205"/>
    </location>
    <ligand>
        <name>Zn(2+)</name>
        <dbReference type="ChEBI" id="CHEBI:29105"/>
    </ligand>
</feature>
<dbReference type="EC" id="6.3.4.20" evidence="1"/>
<dbReference type="EMBL" id="CP000110">
    <property type="protein sequence ID" value="ABB36329.1"/>
    <property type="molecule type" value="Genomic_DNA"/>
</dbReference>
<dbReference type="RefSeq" id="WP_011365524.1">
    <property type="nucleotide sequence ID" value="NC_007516.1"/>
</dbReference>
<dbReference type="SMR" id="Q3AGF3"/>
<dbReference type="STRING" id="110662.Syncc9605_2602"/>
<dbReference type="KEGG" id="syd:Syncc9605_2602"/>
<dbReference type="eggNOG" id="COG0603">
    <property type="taxonomic scope" value="Bacteria"/>
</dbReference>
<dbReference type="HOGENOM" id="CLU_081854_1_0_3"/>
<dbReference type="OrthoDB" id="9789567at2"/>
<dbReference type="UniPathway" id="UPA00391"/>
<dbReference type="GO" id="GO:0005524">
    <property type="term" value="F:ATP binding"/>
    <property type="evidence" value="ECO:0007669"/>
    <property type="project" value="UniProtKB-UniRule"/>
</dbReference>
<dbReference type="GO" id="GO:0016879">
    <property type="term" value="F:ligase activity, forming carbon-nitrogen bonds"/>
    <property type="evidence" value="ECO:0007669"/>
    <property type="project" value="UniProtKB-UniRule"/>
</dbReference>
<dbReference type="GO" id="GO:0008270">
    <property type="term" value="F:zinc ion binding"/>
    <property type="evidence" value="ECO:0007669"/>
    <property type="project" value="UniProtKB-UniRule"/>
</dbReference>
<dbReference type="GO" id="GO:0008616">
    <property type="term" value="P:queuosine biosynthetic process"/>
    <property type="evidence" value="ECO:0007669"/>
    <property type="project" value="UniProtKB-UniRule"/>
</dbReference>
<dbReference type="CDD" id="cd01995">
    <property type="entry name" value="QueC-like"/>
    <property type="match status" value="1"/>
</dbReference>
<dbReference type="Gene3D" id="3.40.50.620">
    <property type="entry name" value="HUPs"/>
    <property type="match status" value="1"/>
</dbReference>
<dbReference type="HAMAP" id="MF_01633">
    <property type="entry name" value="QueC"/>
    <property type="match status" value="1"/>
</dbReference>
<dbReference type="InterPro" id="IPR018317">
    <property type="entry name" value="QueC"/>
</dbReference>
<dbReference type="InterPro" id="IPR014729">
    <property type="entry name" value="Rossmann-like_a/b/a_fold"/>
</dbReference>
<dbReference type="NCBIfam" id="TIGR00364">
    <property type="entry name" value="7-cyano-7-deazaguanine synthase QueC"/>
    <property type="match status" value="1"/>
</dbReference>
<dbReference type="PANTHER" id="PTHR42914">
    <property type="entry name" value="7-CYANO-7-DEAZAGUANINE SYNTHASE"/>
    <property type="match status" value="1"/>
</dbReference>
<dbReference type="PANTHER" id="PTHR42914:SF1">
    <property type="entry name" value="7-CYANO-7-DEAZAGUANINE SYNTHASE"/>
    <property type="match status" value="1"/>
</dbReference>
<dbReference type="Pfam" id="PF06508">
    <property type="entry name" value="QueC"/>
    <property type="match status" value="1"/>
</dbReference>
<dbReference type="PIRSF" id="PIRSF006293">
    <property type="entry name" value="ExsB"/>
    <property type="match status" value="1"/>
</dbReference>
<dbReference type="SUPFAM" id="SSF52402">
    <property type="entry name" value="Adenine nucleotide alpha hydrolases-like"/>
    <property type="match status" value="1"/>
</dbReference>
<proteinExistence type="inferred from homology"/>
<protein>
    <recommendedName>
        <fullName evidence="1">7-cyano-7-deazaguanine synthase</fullName>
        <ecNumber evidence="1">6.3.4.20</ecNumber>
    </recommendedName>
    <alternativeName>
        <fullName evidence="1">7-cyano-7-carbaguanine synthase</fullName>
    </alternativeName>
    <alternativeName>
        <fullName evidence="1">PreQ(0) synthase</fullName>
    </alternativeName>
    <alternativeName>
        <fullName evidence="1">Queuosine biosynthesis protein QueC</fullName>
    </alternativeName>
</protein>
<organism>
    <name type="scientific">Synechococcus sp. (strain CC9605)</name>
    <dbReference type="NCBI Taxonomy" id="110662"/>
    <lineage>
        <taxon>Bacteria</taxon>
        <taxon>Bacillati</taxon>
        <taxon>Cyanobacteriota</taxon>
        <taxon>Cyanophyceae</taxon>
        <taxon>Synechococcales</taxon>
        <taxon>Synechococcaceae</taxon>
        <taxon>Synechococcus</taxon>
    </lineage>
</organism>
<comment type="function">
    <text evidence="1">Catalyzes the ATP-dependent conversion of 7-carboxy-7-deazaguanine (CDG) to 7-cyano-7-deazaguanine (preQ(0)).</text>
</comment>
<comment type="catalytic activity">
    <reaction evidence="1">
        <text>7-carboxy-7-deazaguanine + NH4(+) + ATP = 7-cyano-7-deazaguanine + ADP + phosphate + H2O + H(+)</text>
        <dbReference type="Rhea" id="RHEA:27982"/>
        <dbReference type="ChEBI" id="CHEBI:15377"/>
        <dbReference type="ChEBI" id="CHEBI:15378"/>
        <dbReference type="ChEBI" id="CHEBI:28938"/>
        <dbReference type="ChEBI" id="CHEBI:30616"/>
        <dbReference type="ChEBI" id="CHEBI:43474"/>
        <dbReference type="ChEBI" id="CHEBI:45075"/>
        <dbReference type="ChEBI" id="CHEBI:61036"/>
        <dbReference type="ChEBI" id="CHEBI:456216"/>
        <dbReference type="EC" id="6.3.4.20"/>
    </reaction>
</comment>
<comment type="cofactor">
    <cofactor evidence="1">
        <name>Zn(2+)</name>
        <dbReference type="ChEBI" id="CHEBI:29105"/>
    </cofactor>
    <text evidence="1">Binds 1 zinc ion per subunit.</text>
</comment>
<comment type="pathway">
    <text evidence="1">Purine metabolism; 7-cyano-7-deazaguanine biosynthesis.</text>
</comment>
<comment type="similarity">
    <text evidence="1">Belongs to the QueC family.</text>
</comment>
<gene>
    <name evidence="1" type="primary">queC</name>
    <name type="ordered locus">Syncc9605_2602</name>
</gene>